<evidence type="ECO:0000255" key="1">
    <source>
        <dbReference type="HAMAP-Rule" id="MF_03168"/>
    </source>
</evidence>
<gene>
    <name evidence="1" type="primary">ADK1</name>
    <name type="ORF">MGG_01058</name>
</gene>
<feature type="chain" id="PRO_0000365678" description="Adenylate kinase">
    <location>
        <begin position="1"/>
        <end position="276"/>
    </location>
</feature>
<feature type="region of interest" description="NMP" evidence="1">
    <location>
        <begin position="70"/>
        <end position="99"/>
    </location>
</feature>
<feature type="region of interest" description="LID" evidence="1">
    <location>
        <begin position="167"/>
        <end position="204"/>
    </location>
</feature>
<feature type="binding site" evidence="1">
    <location>
        <begin position="50"/>
        <end position="55"/>
    </location>
    <ligand>
        <name>ATP</name>
        <dbReference type="ChEBI" id="CHEBI:30616"/>
    </ligand>
</feature>
<feature type="binding site" evidence="1">
    <location>
        <position position="71"/>
    </location>
    <ligand>
        <name>AMP</name>
        <dbReference type="ChEBI" id="CHEBI:456215"/>
    </ligand>
</feature>
<feature type="binding site" evidence="1">
    <location>
        <position position="76"/>
    </location>
    <ligand>
        <name>AMP</name>
        <dbReference type="ChEBI" id="CHEBI:456215"/>
    </ligand>
</feature>
<feature type="binding site" evidence="1">
    <location>
        <begin position="97"/>
        <end position="99"/>
    </location>
    <ligand>
        <name>AMP</name>
        <dbReference type="ChEBI" id="CHEBI:456215"/>
    </ligand>
</feature>
<feature type="binding site" evidence="1">
    <location>
        <begin position="126"/>
        <end position="129"/>
    </location>
    <ligand>
        <name>AMP</name>
        <dbReference type="ChEBI" id="CHEBI:456215"/>
    </ligand>
</feature>
<feature type="binding site" evidence="1">
    <location>
        <position position="133"/>
    </location>
    <ligand>
        <name>AMP</name>
        <dbReference type="ChEBI" id="CHEBI:456215"/>
    </ligand>
</feature>
<feature type="binding site" evidence="1">
    <location>
        <position position="168"/>
    </location>
    <ligand>
        <name>ATP</name>
        <dbReference type="ChEBI" id="CHEBI:30616"/>
    </ligand>
</feature>
<feature type="binding site" evidence="1">
    <location>
        <begin position="177"/>
        <end position="178"/>
    </location>
    <ligand>
        <name>ATP</name>
        <dbReference type="ChEBI" id="CHEBI:30616"/>
    </ligand>
</feature>
<feature type="binding site" evidence="1">
    <location>
        <position position="201"/>
    </location>
    <ligand>
        <name>AMP</name>
        <dbReference type="ChEBI" id="CHEBI:456215"/>
    </ligand>
</feature>
<feature type="binding site" evidence="1">
    <location>
        <position position="212"/>
    </location>
    <ligand>
        <name>AMP</name>
        <dbReference type="ChEBI" id="CHEBI:456215"/>
    </ligand>
</feature>
<feature type="binding site" evidence="1">
    <location>
        <position position="240"/>
    </location>
    <ligand>
        <name>ATP</name>
        <dbReference type="ChEBI" id="CHEBI:30616"/>
    </ligand>
</feature>
<reference key="1">
    <citation type="journal article" date="2005" name="Nature">
        <title>The genome sequence of the rice blast fungus Magnaporthe grisea.</title>
        <authorList>
            <person name="Dean R.A."/>
            <person name="Talbot N.J."/>
            <person name="Ebbole D.J."/>
            <person name="Farman M.L."/>
            <person name="Mitchell T.K."/>
            <person name="Orbach M.J."/>
            <person name="Thon M.R."/>
            <person name="Kulkarni R."/>
            <person name="Xu J.-R."/>
            <person name="Pan H."/>
            <person name="Read N.D."/>
            <person name="Lee Y.-H."/>
            <person name="Carbone I."/>
            <person name="Brown D."/>
            <person name="Oh Y.Y."/>
            <person name="Donofrio N."/>
            <person name="Jeong J.S."/>
            <person name="Soanes D.M."/>
            <person name="Djonovic S."/>
            <person name="Kolomiets E."/>
            <person name="Rehmeyer C."/>
            <person name="Li W."/>
            <person name="Harding M."/>
            <person name="Kim S."/>
            <person name="Lebrun M.-H."/>
            <person name="Bohnert H."/>
            <person name="Coughlan S."/>
            <person name="Butler J."/>
            <person name="Calvo S.E."/>
            <person name="Ma L.-J."/>
            <person name="Nicol R."/>
            <person name="Purcell S."/>
            <person name="Nusbaum C."/>
            <person name="Galagan J.E."/>
            <person name="Birren B.W."/>
        </authorList>
    </citation>
    <scope>NUCLEOTIDE SEQUENCE [LARGE SCALE GENOMIC DNA]</scope>
    <source>
        <strain>70-15 / ATCC MYA-4617 / FGSC 8958</strain>
    </source>
</reference>
<keyword id="KW-0067">ATP-binding</keyword>
<keyword id="KW-0963">Cytoplasm</keyword>
<keyword id="KW-0418">Kinase</keyword>
<keyword id="KW-0496">Mitochondrion</keyword>
<keyword id="KW-0547">Nucleotide-binding</keyword>
<keyword id="KW-1185">Reference proteome</keyword>
<keyword id="KW-0808">Transferase</keyword>
<accession>A4RD93</accession>
<accession>G4NCK0</accession>
<comment type="function">
    <text evidence="1">Catalyzes the reversible transfer of the terminal phosphate group between ATP and AMP. Plays an important role in cellular energy homeostasis and in adenine nucleotide metabolism. Adenylate kinase activity is critical for regulation of the phosphate utilization and the AMP de novo biosynthesis pathways.</text>
</comment>
<comment type="catalytic activity">
    <reaction evidence="1">
        <text>AMP + ATP = 2 ADP</text>
        <dbReference type="Rhea" id="RHEA:12973"/>
        <dbReference type="ChEBI" id="CHEBI:30616"/>
        <dbReference type="ChEBI" id="CHEBI:456215"/>
        <dbReference type="ChEBI" id="CHEBI:456216"/>
        <dbReference type="EC" id="2.7.4.3"/>
    </reaction>
</comment>
<comment type="subunit">
    <text evidence="1">Monomer.</text>
</comment>
<comment type="subcellular location">
    <subcellularLocation>
        <location evidence="1">Cytoplasm</location>
        <location evidence="1">Cytosol</location>
    </subcellularLocation>
    <subcellularLocation>
        <location evidence="1">Mitochondrion intermembrane space</location>
    </subcellularLocation>
    <text evidence="1">Predominantly mitochondrial.</text>
</comment>
<comment type="domain">
    <text evidence="1">Consists of three domains, a large central CORE domain and two small peripheral domains, NMPbind and LID, which undergo movements during catalysis. The LID domain closes over the site of phosphoryl transfer upon ATP binding. Assembling and dissambling the active center during each catalytic cycle provides an effective means to prevent ATP hydrolysis.</text>
</comment>
<comment type="similarity">
    <text evidence="1">Belongs to the adenylate kinase family. AK2 subfamily.</text>
</comment>
<proteinExistence type="inferred from homology"/>
<dbReference type="EC" id="2.7.4.3" evidence="1"/>
<dbReference type="EMBL" id="CM001235">
    <property type="protein sequence ID" value="EHA48297.1"/>
    <property type="molecule type" value="Genomic_DNA"/>
</dbReference>
<dbReference type="RefSeq" id="XP_003717881.1">
    <property type="nucleotide sequence ID" value="XM_003717833.1"/>
</dbReference>
<dbReference type="SMR" id="A4RD93"/>
<dbReference type="FunCoup" id="A4RD93">
    <property type="interactions" value="830"/>
</dbReference>
<dbReference type="STRING" id="242507.A4RD93"/>
<dbReference type="EnsemblFungi" id="MGG_01058T0">
    <property type="protein sequence ID" value="MGG_01058T0"/>
    <property type="gene ID" value="MGG_01058"/>
</dbReference>
<dbReference type="GeneID" id="2674388"/>
<dbReference type="KEGG" id="mgr:MGG_01058"/>
<dbReference type="VEuPathDB" id="FungiDB:MGG_01058"/>
<dbReference type="eggNOG" id="KOG3078">
    <property type="taxonomic scope" value="Eukaryota"/>
</dbReference>
<dbReference type="HOGENOM" id="CLU_032354_1_0_1"/>
<dbReference type="InParanoid" id="A4RD93"/>
<dbReference type="OMA" id="VYHEQTA"/>
<dbReference type="OrthoDB" id="439792at2759"/>
<dbReference type="Proteomes" id="UP000009058">
    <property type="component" value="Chromosome 5"/>
</dbReference>
<dbReference type="GO" id="GO:0005829">
    <property type="term" value="C:cytosol"/>
    <property type="evidence" value="ECO:0007669"/>
    <property type="project" value="UniProtKB-SubCell"/>
</dbReference>
<dbReference type="GO" id="GO:0005758">
    <property type="term" value="C:mitochondrial intermembrane space"/>
    <property type="evidence" value="ECO:0007669"/>
    <property type="project" value="UniProtKB-SubCell"/>
</dbReference>
<dbReference type="GO" id="GO:0004017">
    <property type="term" value="F:adenylate kinase activity"/>
    <property type="evidence" value="ECO:0007669"/>
    <property type="project" value="UniProtKB-UniRule"/>
</dbReference>
<dbReference type="GO" id="GO:0016208">
    <property type="term" value="F:AMP binding"/>
    <property type="evidence" value="ECO:0007669"/>
    <property type="project" value="EnsemblFungi"/>
</dbReference>
<dbReference type="GO" id="GO:0005524">
    <property type="term" value="F:ATP binding"/>
    <property type="evidence" value="ECO:0007669"/>
    <property type="project" value="UniProtKB-KW"/>
</dbReference>
<dbReference type="GO" id="GO:0003688">
    <property type="term" value="F:DNA replication origin binding"/>
    <property type="evidence" value="ECO:0007669"/>
    <property type="project" value="EnsemblFungi"/>
</dbReference>
<dbReference type="GO" id="GO:0006172">
    <property type="term" value="P:ADP biosynthetic process"/>
    <property type="evidence" value="ECO:0007669"/>
    <property type="project" value="UniProtKB-UniRule"/>
</dbReference>
<dbReference type="GO" id="GO:0046033">
    <property type="term" value="P:AMP metabolic process"/>
    <property type="evidence" value="ECO:0007669"/>
    <property type="project" value="UniProtKB-UniRule"/>
</dbReference>
<dbReference type="GO" id="GO:0046034">
    <property type="term" value="P:ATP metabolic process"/>
    <property type="evidence" value="ECO:0007669"/>
    <property type="project" value="UniProtKB-UniRule"/>
</dbReference>
<dbReference type="GO" id="GO:0006270">
    <property type="term" value="P:DNA replication initiation"/>
    <property type="evidence" value="ECO:0007669"/>
    <property type="project" value="EnsemblFungi"/>
</dbReference>
<dbReference type="GO" id="GO:0036388">
    <property type="term" value="P:pre-replicative complex assembly"/>
    <property type="evidence" value="ECO:0007669"/>
    <property type="project" value="EnsemblFungi"/>
</dbReference>
<dbReference type="CDD" id="cd01428">
    <property type="entry name" value="ADK"/>
    <property type="match status" value="1"/>
</dbReference>
<dbReference type="FunFam" id="3.40.50.300:FF:000106">
    <property type="entry name" value="Adenylate kinase mitochondrial"/>
    <property type="match status" value="1"/>
</dbReference>
<dbReference type="Gene3D" id="3.40.50.300">
    <property type="entry name" value="P-loop containing nucleotide triphosphate hydrolases"/>
    <property type="match status" value="1"/>
</dbReference>
<dbReference type="HAMAP" id="MF_00235">
    <property type="entry name" value="Adenylate_kinase_Adk"/>
    <property type="match status" value="1"/>
</dbReference>
<dbReference type="HAMAP" id="MF_03168">
    <property type="entry name" value="Adenylate_kinase_AK2"/>
    <property type="match status" value="1"/>
</dbReference>
<dbReference type="InterPro" id="IPR006259">
    <property type="entry name" value="Adenyl_kin_sub"/>
</dbReference>
<dbReference type="InterPro" id="IPR000850">
    <property type="entry name" value="Adenylat/UMP-CMP_kin"/>
</dbReference>
<dbReference type="InterPro" id="IPR033690">
    <property type="entry name" value="Adenylat_kinase_CS"/>
</dbReference>
<dbReference type="InterPro" id="IPR007862">
    <property type="entry name" value="Adenylate_kinase_lid-dom"/>
</dbReference>
<dbReference type="InterPro" id="IPR028587">
    <property type="entry name" value="AK2"/>
</dbReference>
<dbReference type="InterPro" id="IPR027417">
    <property type="entry name" value="P-loop_NTPase"/>
</dbReference>
<dbReference type="NCBIfam" id="TIGR01351">
    <property type="entry name" value="adk"/>
    <property type="match status" value="1"/>
</dbReference>
<dbReference type="NCBIfam" id="NF001380">
    <property type="entry name" value="PRK00279.1-2"/>
    <property type="match status" value="1"/>
</dbReference>
<dbReference type="NCBIfam" id="NF001381">
    <property type="entry name" value="PRK00279.1-3"/>
    <property type="match status" value="1"/>
</dbReference>
<dbReference type="NCBIfam" id="NF011100">
    <property type="entry name" value="PRK14527.1"/>
    <property type="match status" value="1"/>
</dbReference>
<dbReference type="PANTHER" id="PTHR23359">
    <property type="entry name" value="NUCLEOTIDE KINASE"/>
    <property type="match status" value="1"/>
</dbReference>
<dbReference type="Pfam" id="PF00406">
    <property type="entry name" value="ADK"/>
    <property type="match status" value="1"/>
</dbReference>
<dbReference type="Pfam" id="PF05191">
    <property type="entry name" value="ADK_lid"/>
    <property type="match status" value="1"/>
</dbReference>
<dbReference type="PRINTS" id="PR00094">
    <property type="entry name" value="ADENYLTKNASE"/>
</dbReference>
<dbReference type="SUPFAM" id="SSF52540">
    <property type="entry name" value="P-loop containing nucleoside triphosphate hydrolases"/>
    <property type="match status" value="1"/>
</dbReference>
<dbReference type="PROSITE" id="PS00113">
    <property type="entry name" value="ADENYLATE_KINASE"/>
    <property type="match status" value="1"/>
</dbReference>
<name>KAD2_PYRO7</name>
<sequence>MGAMEDQLQRLGSVLDSLDARVKKLEQHPTLGGGSSTAQEIRMILIGPPGAGKGTQAPKIKEKFSCCHLATGDMLRSQVAKKTPLGREAKKIMDQGGLVSDDIVIGMIKEELDTNVECKGGFILDGFPRTVPQAQSLDAMLQARNQKLQHAVELQIDDALLVARITGRLVHPASGRSYHTTFNPPKKAMTDDVTGEPLIQRSDDNADALKKRLATYHSQTAPVVDYYRKTGIWKPIDASQEPGTVWKSLLNIFDGDAKKASSAGGGILDKLAASGR</sequence>
<organism>
    <name type="scientific">Pyricularia oryzae (strain 70-15 / ATCC MYA-4617 / FGSC 8958)</name>
    <name type="common">Rice blast fungus</name>
    <name type="synonym">Magnaporthe oryzae</name>
    <dbReference type="NCBI Taxonomy" id="242507"/>
    <lineage>
        <taxon>Eukaryota</taxon>
        <taxon>Fungi</taxon>
        <taxon>Dikarya</taxon>
        <taxon>Ascomycota</taxon>
        <taxon>Pezizomycotina</taxon>
        <taxon>Sordariomycetes</taxon>
        <taxon>Sordariomycetidae</taxon>
        <taxon>Magnaporthales</taxon>
        <taxon>Pyriculariaceae</taxon>
        <taxon>Pyricularia</taxon>
    </lineage>
</organism>
<protein>
    <recommendedName>
        <fullName evidence="1">Adenylate kinase</fullName>
        <ecNumber evidence="1">2.7.4.3</ecNumber>
    </recommendedName>
    <alternativeName>
        <fullName evidence="1">ATP-AMP transphosphorylase</fullName>
    </alternativeName>
    <alternativeName>
        <fullName evidence="1">ATP:AMP phosphotransferase</fullName>
    </alternativeName>
    <alternativeName>
        <fullName evidence="1">Adenylate kinase cytosolic and mitochondrial</fullName>
    </alternativeName>
    <alternativeName>
        <fullName evidence="1">Adenylate monophosphate kinase</fullName>
    </alternativeName>
</protein>